<organism>
    <name type="scientific">Haloarcula vallismortis</name>
    <name type="common">Halobacterium vallismortis</name>
    <dbReference type="NCBI Taxonomy" id="28442"/>
    <lineage>
        <taxon>Archaea</taxon>
        <taxon>Methanobacteriati</taxon>
        <taxon>Methanobacteriota</taxon>
        <taxon>Stenosarchaea group</taxon>
        <taxon>Halobacteria</taxon>
        <taxon>Halobacteriales</taxon>
        <taxon>Haloarculaceae</taxon>
        <taxon>Haloarcula</taxon>
    </lineage>
</organism>
<protein>
    <recommendedName>
        <fullName>Transcription initiation factor IIB</fullName>
        <shortName>TFIIB</shortName>
    </recommendedName>
</protein>
<feature type="chain" id="PRO_0000119318" description="Transcription initiation factor IIB">
    <location>
        <begin position="1" status="less than"/>
        <end position="114"/>
    </location>
</feature>
<feature type="repeat" description="1">
    <location>
        <begin position="1" status="less than"/>
        <end position="17"/>
    </location>
</feature>
<feature type="repeat" description="2">
    <location>
        <begin position="28"/>
        <end position="109"/>
    </location>
</feature>
<feature type="non-terminal residue">
    <location>
        <position position="1"/>
    </location>
</feature>
<accession>P42198</accession>
<proteinExistence type="inferred from homology"/>
<gene>
    <name type="primary">tfb</name>
</gene>
<keyword id="KW-0677">Repeat</keyword>
<keyword id="KW-0804">Transcription</keyword>
<keyword id="KW-0805">Transcription regulation</keyword>
<dbReference type="EMBL" id="Z35308">
    <property type="protein sequence ID" value="CAA84551.1"/>
    <property type="molecule type" value="Genomic_DNA"/>
</dbReference>
<dbReference type="PIR" id="S55298">
    <property type="entry name" value="S55298"/>
</dbReference>
<dbReference type="SMR" id="P42198"/>
<dbReference type="STRING" id="28442.SAMN05443574_101540"/>
<dbReference type="GO" id="GO:0097550">
    <property type="term" value="C:transcription preinitiation complex"/>
    <property type="evidence" value="ECO:0007669"/>
    <property type="project" value="TreeGrafter"/>
</dbReference>
<dbReference type="GO" id="GO:0017025">
    <property type="term" value="F:TBP-class protein binding"/>
    <property type="evidence" value="ECO:0007669"/>
    <property type="project" value="InterPro"/>
</dbReference>
<dbReference type="GO" id="GO:0070897">
    <property type="term" value="P:transcription preinitiation complex assembly"/>
    <property type="evidence" value="ECO:0007669"/>
    <property type="project" value="InterPro"/>
</dbReference>
<dbReference type="CDD" id="cd20550">
    <property type="entry name" value="CYCLIN_TFIIB_archaea_like_rpt2"/>
    <property type="match status" value="1"/>
</dbReference>
<dbReference type="FunFam" id="1.10.472.10:FF:000023">
    <property type="entry name" value="Transcription initiation factor IIB"/>
    <property type="match status" value="1"/>
</dbReference>
<dbReference type="Gene3D" id="1.10.472.10">
    <property type="entry name" value="Cyclin-like"/>
    <property type="match status" value="1"/>
</dbReference>
<dbReference type="InterPro" id="IPR013763">
    <property type="entry name" value="Cyclin-like_dom"/>
</dbReference>
<dbReference type="InterPro" id="IPR036915">
    <property type="entry name" value="Cyclin-like_sf"/>
</dbReference>
<dbReference type="InterPro" id="IPR000812">
    <property type="entry name" value="TFIIB"/>
</dbReference>
<dbReference type="InterPro" id="IPR023486">
    <property type="entry name" value="TFIIB_CS"/>
</dbReference>
<dbReference type="InterPro" id="IPR013150">
    <property type="entry name" value="TFIIB_cyclin"/>
</dbReference>
<dbReference type="PANTHER" id="PTHR11618:SF13">
    <property type="entry name" value="TRANSCRIPTION INITIATION FACTOR IIB"/>
    <property type="match status" value="1"/>
</dbReference>
<dbReference type="PANTHER" id="PTHR11618">
    <property type="entry name" value="TRANSCRIPTION INITIATION FACTOR IIB-RELATED"/>
    <property type="match status" value="1"/>
</dbReference>
<dbReference type="Pfam" id="PF00382">
    <property type="entry name" value="TFIIB"/>
    <property type="match status" value="1"/>
</dbReference>
<dbReference type="PRINTS" id="PR00685">
    <property type="entry name" value="TIFACTORIIB"/>
</dbReference>
<dbReference type="SMART" id="SM00385">
    <property type="entry name" value="CYCLIN"/>
    <property type="match status" value="1"/>
</dbReference>
<dbReference type="SUPFAM" id="SSF47954">
    <property type="entry name" value="Cyclin-like"/>
    <property type="match status" value="1"/>
</dbReference>
<dbReference type="PROSITE" id="PS00782">
    <property type="entry name" value="TFIIB"/>
    <property type="match status" value="1"/>
</dbReference>
<comment type="function">
    <text evidence="1">Stabilizes TBP binding to an archaeal box-A promoter. Also responsible for recruiting RNA polymerase II to the pre-initiation complex (DNA-TBP-TFIIB) (By similarity).</text>
</comment>
<comment type="similarity">
    <text evidence="2">Belongs to the TFIIB family.</text>
</comment>
<evidence type="ECO:0000250" key="1"/>
<evidence type="ECO:0000305" key="2"/>
<sequence>VEQKEIGRTYRYVAQELELKMEPVDPKQYVPRFASELELSEEVQSKANEIIDTTAEQGLLSGKSPTGYAAAAIYAASLLCNEKKTQREVADVAQVTEVTIRNRYQEQIEAMGIH</sequence>
<name>TF2B_HALVA</name>
<reference key="1">
    <citation type="journal article" date="1995" name="Proc. Natl. Acad. Sci. U.S.A.">
        <title>The primary structure of sensory rhodopsin II: a member of an additional retinal protein subgroup is coexpressed with its transducer, the halobacterial transducer of rhodopsin II.</title>
        <authorList>
            <person name="Seidel R."/>
            <person name="Scharf B."/>
            <person name="Gautel M."/>
            <person name="Kleine K."/>
            <person name="Oesterhelt D."/>
            <person name="Engelhard M."/>
        </authorList>
    </citation>
    <scope>NUCLEOTIDE SEQUENCE [GENOMIC DNA]</scope>
    <source>
        <strain>ATCC 29715 / DSM 3756 / JCM 8877 / NBRC 14741 / NCIMB 2082</strain>
    </source>
</reference>